<dbReference type="EMBL" id="CU329672">
    <property type="protein sequence ID" value="CAA20681.1"/>
    <property type="molecule type" value="Genomic_DNA"/>
</dbReference>
<dbReference type="PIR" id="T41072">
    <property type="entry name" value="T41072"/>
</dbReference>
<dbReference type="RefSeq" id="NP_587808.1">
    <property type="nucleotide sequence ID" value="NM_001022801.2"/>
</dbReference>
<dbReference type="BioGRID" id="275805">
    <property type="interactions" value="29"/>
</dbReference>
<dbReference type="FunCoup" id="O74444">
    <property type="interactions" value="411"/>
</dbReference>
<dbReference type="STRING" id="284812.O74444"/>
<dbReference type="iPTMnet" id="O74444"/>
<dbReference type="PaxDb" id="4896-SPCC1682.15.1"/>
<dbReference type="EnsemblFungi" id="SPCC1682.15.1">
    <property type="protein sequence ID" value="SPCC1682.15.1:pep"/>
    <property type="gene ID" value="SPCC1682.15"/>
</dbReference>
<dbReference type="GeneID" id="2539235"/>
<dbReference type="KEGG" id="spo:2539235"/>
<dbReference type="PomBase" id="SPCC1682.15">
    <property type="gene designation" value="mug122"/>
</dbReference>
<dbReference type="VEuPathDB" id="FungiDB:SPCC1682.15"/>
<dbReference type="eggNOG" id="ENOG502RM76">
    <property type="taxonomic scope" value="Eukaryota"/>
</dbReference>
<dbReference type="HOGENOM" id="CLU_371373_0_0_1"/>
<dbReference type="InParanoid" id="O74444"/>
<dbReference type="OMA" id="FVNRCII"/>
<dbReference type="PRO" id="PR:O74444"/>
<dbReference type="Proteomes" id="UP000002485">
    <property type="component" value="Chromosome III"/>
</dbReference>
<dbReference type="GO" id="GO:0005783">
    <property type="term" value="C:endoplasmic reticulum"/>
    <property type="evidence" value="ECO:0007005"/>
    <property type="project" value="PomBase"/>
</dbReference>
<dbReference type="GO" id="GO:0005789">
    <property type="term" value="C:endoplasmic reticulum membrane"/>
    <property type="evidence" value="ECO:0007669"/>
    <property type="project" value="UniProtKB-SubCell"/>
</dbReference>
<dbReference type="GO" id="GO:0043231">
    <property type="term" value="C:intracellular membrane-bounded organelle"/>
    <property type="evidence" value="ECO:0000318"/>
    <property type="project" value="GO_Central"/>
</dbReference>
<dbReference type="GO" id="GO:0035091">
    <property type="term" value="F:phosphatidylinositol binding"/>
    <property type="evidence" value="ECO:0000318"/>
    <property type="project" value="GO_Central"/>
</dbReference>
<dbReference type="GO" id="GO:0051321">
    <property type="term" value="P:meiotic cell cycle"/>
    <property type="evidence" value="ECO:0007669"/>
    <property type="project" value="UniProtKB-KW"/>
</dbReference>
<dbReference type="CDD" id="cd06093">
    <property type="entry name" value="PX_domain"/>
    <property type="match status" value="1"/>
</dbReference>
<dbReference type="FunFam" id="3.30.1520.10:FF:000065">
    <property type="entry name" value="PX domain protein (AFU_orthologue AFUA_2G07450)"/>
    <property type="match status" value="1"/>
</dbReference>
<dbReference type="Gene3D" id="3.30.1520.10">
    <property type="entry name" value="Phox-like domain"/>
    <property type="match status" value="1"/>
</dbReference>
<dbReference type="InterPro" id="IPR003114">
    <property type="entry name" value="Phox_assoc"/>
</dbReference>
<dbReference type="InterPro" id="IPR001683">
    <property type="entry name" value="PX_dom"/>
</dbReference>
<dbReference type="InterPro" id="IPR036871">
    <property type="entry name" value="PX_dom_sf"/>
</dbReference>
<dbReference type="InterPro" id="IPR013937">
    <property type="entry name" value="Sorting_nexin_C"/>
</dbReference>
<dbReference type="PANTHER" id="PTHR22775:SF47">
    <property type="entry name" value="MEIOTICALLY UP-REGULATED GENE 122 PROTEIN"/>
    <property type="match status" value="1"/>
</dbReference>
<dbReference type="PANTHER" id="PTHR22775">
    <property type="entry name" value="SORTING NEXIN"/>
    <property type="match status" value="1"/>
</dbReference>
<dbReference type="Pfam" id="PF08628">
    <property type="entry name" value="Nexin_C"/>
    <property type="match status" value="1"/>
</dbReference>
<dbReference type="Pfam" id="PF00787">
    <property type="entry name" value="PX"/>
    <property type="match status" value="1"/>
</dbReference>
<dbReference type="Pfam" id="PF02194">
    <property type="entry name" value="PXA"/>
    <property type="match status" value="1"/>
</dbReference>
<dbReference type="SMART" id="SM00313">
    <property type="entry name" value="PXA"/>
    <property type="match status" value="1"/>
</dbReference>
<dbReference type="SUPFAM" id="SSF64268">
    <property type="entry name" value="PX domain"/>
    <property type="match status" value="1"/>
</dbReference>
<dbReference type="PROSITE" id="PS51207">
    <property type="entry name" value="PXA"/>
    <property type="match status" value="1"/>
</dbReference>
<accession>O74444</accession>
<comment type="function">
    <text evidence="4">Has a role in meiosis.</text>
</comment>
<comment type="subcellular location">
    <subcellularLocation>
        <location evidence="5">Endoplasmic reticulum membrane</location>
        <topology evidence="5">Single-pass type II membrane protein</topology>
    </subcellularLocation>
</comment>
<comment type="similarity">
    <text evidence="6">Belongs to the sorting nexin family.</text>
</comment>
<feature type="chain" id="PRO_0000278572" description="Meiotically up-regulated gene 122 protein">
    <location>
        <begin position="1"/>
        <end position="749"/>
    </location>
</feature>
<feature type="topological domain" description="Cytoplasmic" evidence="1">
    <location>
        <begin position="1"/>
        <end position="20"/>
    </location>
</feature>
<feature type="transmembrane region" description="Helical; Signal-anchor for type II membrane protein" evidence="1">
    <location>
        <begin position="21"/>
        <end position="41"/>
    </location>
</feature>
<feature type="topological domain" description="Lumenal" evidence="1">
    <location>
        <begin position="42"/>
        <end position="749"/>
    </location>
</feature>
<feature type="domain" description="PXA" evidence="2">
    <location>
        <begin position="88"/>
        <end position="261"/>
    </location>
</feature>
<feature type="domain" description="PX">
    <location>
        <begin position="311"/>
        <end position="422"/>
    </location>
</feature>
<feature type="region of interest" description="Disordered" evidence="3">
    <location>
        <begin position="439"/>
        <end position="489"/>
    </location>
</feature>
<feature type="region of interest" description="Disordered" evidence="3">
    <location>
        <begin position="504"/>
        <end position="546"/>
    </location>
</feature>
<feature type="compositionally biased region" description="Polar residues" evidence="3">
    <location>
        <begin position="440"/>
        <end position="461"/>
    </location>
</feature>
<feature type="compositionally biased region" description="Polar residues" evidence="3">
    <location>
        <begin position="475"/>
        <end position="489"/>
    </location>
</feature>
<evidence type="ECO:0000255" key="1"/>
<evidence type="ECO:0000255" key="2">
    <source>
        <dbReference type="PROSITE-ProRule" id="PRU00553"/>
    </source>
</evidence>
<evidence type="ECO:0000256" key="3">
    <source>
        <dbReference type="SAM" id="MobiDB-lite"/>
    </source>
</evidence>
<evidence type="ECO:0000269" key="4">
    <source>
    </source>
</evidence>
<evidence type="ECO:0000269" key="5">
    <source>
    </source>
</evidence>
<evidence type="ECO:0000305" key="6"/>
<name>MU122_SCHPO</name>
<gene>
    <name type="primary">mug122</name>
    <name type="ORF">SPCC1682.15</name>
</gene>
<proteinExistence type="evidence at protein level"/>
<sequence>MYRKWDLCITRHLLPYIEHSVIPIIALLVLSLIFYILYICFGTTSYILSGIILGAYVNSLFHNNHSVILNIKHPELGEPLKPYQTPLPPELEAPLQLLISKLTQHYINGWYKHVSEDPSFIREVQSTIEYIMRQFYAYVSSQESSHIIYELLKNAISTTTLVLSDLNHFRSKKIPLTEFALRYPESAVSKLLDQASIERTLRAQASAMIVKFSRPEDSACLPLHCLLREVLAMQVFKRITTHCSSPRFVNRCIILYFSSSEDKSDCLAKKNYVNKCLMAKALKDYPVHTNIDPDAGKLSFDDAFYEAHIELHYQFLKEASLNTLIKDKKMLKFIITVRPVHLHVSPWVVYRRYRGFKTLYYLLKKQSARNGRAVPSFPVWRGNTYEKFREGLYFFIEALLHDSHFATNVDVRKFFAKSMRSHPLVDDIYNGFDVDKKHQSSSVPTLPNLTNISRVLSNKTSKSAKPKRSERTGLLSHQSTLAPEPLSQQRDSFELCTTGYRDTGSCTSDDEDSIHEPYRPASTQPTENPPAMPDHNGSPTTEPPKPNAFELKEERLKEIISGGFALVDELCSLNSKLWFFRKSVLTIMKTTVLHGPGRFSAQVERMLKNQIYDKLSNTQLVGDLLTSLILNVWPDEKKAMESHSTRAHRRSTESKISFDSEADSLFEEASKSVPEDPVSVFCDEESDESLRLRAEKTLVENALSENFTLMLGQSTSEESLKIIFELLQEPQFVQGFLAHLLSNALRSII</sequence>
<keyword id="KW-0256">Endoplasmic reticulum</keyword>
<keyword id="KW-0469">Meiosis</keyword>
<keyword id="KW-0472">Membrane</keyword>
<keyword id="KW-1185">Reference proteome</keyword>
<keyword id="KW-0735">Signal-anchor</keyword>
<keyword id="KW-0812">Transmembrane</keyword>
<keyword id="KW-1133">Transmembrane helix</keyword>
<reference key="1">
    <citation type="journal article" date="2002" name="Nature">
        <title>The genome sequence of Schizosaccharomyces pombe.</title>
        <authorList>
            <person name="Wood V."/>
            <person name="Gwilliam R."/>
            <person name="Rajandream M.A."/>
            <person name="Lyne M.H."/>
            <person name="Lyne R."/>
            <person name="Stewart A."/>
            <person name="Sgouros J.G."/>
            <person name="Peat N."/>
            <person name="Hayles J."/>
            <person name="Baker S.G."/>
            <person name="Basham D."/>
            <person name="Bowman S."/>
            <person name="Brooks K."/>
            <person name="Brown D."/>
            <person name="Brown S."/>
            <person name="Chillingworth T."/>
            <person name="Churcher C.M."/>
            <person name="Collins M."/>
            <person name="Connor R."/>
            <person name="Cronin A."/>
            <person name="Davis P."/>
            <person name="Feltwell T."/>
            <person name="Fraser A."/>
            <person name="Gentles S."/>
            <person name="Goble A."/>
            <person name="Hamlin N."/>
            <person name="Harris D.E."/>
            <person name="Hidalgo J."/>
            <person name="Hodgson G."/>
            <person name="Holroyd S."/>
            <person name="Hornsby T."/>
            <person name="Howarth S."/>
            <person name="Huckle E.J."/>
            <person name="Hunt S."/>
            <person name="Jagels K."/>
            <person name="James K.D."/>
            <person name="Jones L."/>
            <person name="Jones M."/>
            <person name="Leather S."/>
            <person name="McDonald S."/>
            <person name="McLean J."/>
            <person name="Mooney P."/>
            <person name="Moule S."/>
            <person name="Mungall K.L."/>
            <person name="Murphy L.D."/>
            <person name="Niblett D."/>
            <person name="Odell C."/>
            <person name="Oliver K."/>
            <person name="O'Neil S."/>
            <person name="Pearson D."/>
            <person name="Quail M.A."/>
            <person name="Rabbinowitsch E."/>
            <person name="Rutherford K.M."/>
            <person name="Rutter S."/>
            <person name="Saunders D."/>
            <person name="Seeger K."/>
            <person name="Sharp S."/>
            <person name="Skelton J."/>
            <person name="Simmonds M.N."/>
            <person name="Squares R."/>
            <person name="Squares S."/>
            <person name="Stevens K."/>
            <person name="Taylor K."/>
            <person name="Taylor R.G."/>
            <person name="Tivey A."/>
            <person name="Walsh S.V."/>
            <person name="Warren T."/>
            <person name="Whitehead S."/>
            <person name="Woodward J.R."/>
            <person name="Volckaert G."/>
            <person name="Aert R."/>
            <person name="Robben J."/>
            <person name="Grymonprez B."/>
            <person name="Weltjens I."/>
            <person name="Vanstreels E."/>
            <person name="Rieger M."/>
            <person name="Schaefer M."/>
            <person name="Mueller-Auer S."/>
            <person name="Gabel C."/>
            <person name="Fuchs M."/>
            <person name="Duesterhoeft A."/>
            <person name="Fritzc C."/>
            <person name="Holzer E."/>
            <person name="Moestl D."/>
            <person name="Hilbert H."/>
            <person name="Borzym K."/>
            <person name="Langer I."/>
            <person name="Beck A."/>
            <person name="Lehrach H."/>
            <person name="Reinhardt R."/>
            <person name="Pohl T.M."/>
            <person name="Eger P."/>
            <person name="Zimmermann W."/>
            <person name="Wedler H."/>
            <person name="Wambutt R."/>
            <person name="Purnelle B."/>
            <person name="Goffeau A."/>
            <person name="Cadieu E."/>
            <person name="Dreano S."/>
            <person name="Gloux S."/>
            <person name="Lelaure V."/>
            <person name="Mottier S."/>
            <person name="Galibert F."/>
            <person name="Aves S.J."/>
            <person name="Xiang Z."/>
            <person name="Hunt C."/>
            <person name="Moore K."/>
            <person name="Hurst S.M."/>
            <person name="Lucas M."/>
            <person name="Rochet M."/>
            <person name="Gaillardin C."/>
            <person name="Tallada V.A."/>
            <person name="Garzon A."/>
            <person name="Thode G."/>
            <person name="Daga R.R."/>
            <person name="Cruzado L."/>
            <person name="Jimenez J."/>
            <person name="Sanchez M."/>
            <person name="del Rey F."/>
            <person name="Benito J."/>
            <person name="Dominguez A."/>
            <person name="Revuelta J.L."/>
            <person name="Moreno S."/>
            <person name="Armstrong J."/>
            <person name="Forsburg S.L."/>
            <person name="Cerutti L."/>
            <person name="Lowe T."/>
            <person name="McCombie W.R."/>
            <person name="Paulsen I."/>
            <person name="Potashkin J."/>
            <person name="Shpakovski G.V."/>
            <person name="Ussery D."/>
            <person name="Barrell B.G."/>
            <person name="Nurse P."/>
        </authorList>
    </citation>
    <scope>NUCLEOTIDE SEQUENCE [LARGE SCALE GENOMIC DNA]</scope>
    <source>
        <strain>972 / ATCC 24843</strain>
    </source>
</reference>
<reference key="2">
    <citation type="journal article" date="2005" name="Curr. Biol.">
        <title>A large-scale screen in S. pombe identifies seven novel genes required for critical meiotic events.</title>
        <authorList>
            <person name="Martin-Castellanos C."/>
            <person name="Blanco M."/>
            <person name="Rozalen A.E."/>
            <person name="Perez-Hidalgo L."/>
            <person name="Garcia A.I."/>
            <person name="Conde F."/>
            <person name="Mata J."/>
            <person name="Ellermeier C."/>
            <person name="Davis L."/>
            <person name="San-Segundo P."/>
            <person name="Smith G.R."/>
            <person name="Moreno S."/>
        </authorList>
    </citation>
    <scope>FUNCTION IN MEIOSIS</scope>
</reference>
<reference key="3">
    <citation type="journal article" date="2006" name="Nat. Biotechnol.">
        <title>ORFeome cloning and global analysis of protein localization in the fission yeast Schizosaccharomyces pombe.</title>
        <authorList>
            <person name="Matsuyama A."/>
            <person name="Arai R."/>
            <person name="Yashiroda Y."/>
            <person name="Shirai A."/>
            <person name="Kamata A."/>
            <person name="Sekido S."/>
            <person name="Kobayashi Y."/>
            <person name="Hashimoto A."/>
            <person name="Hamamoto M."/>
            <person name="Hiraoka Y."/>
            <person name="Horinouchi S."/>
            <person name="Yoshida M."/>
        </authorList>
    </citation>
    <scope>SUBCELLULAR LOCATION [LARGE SCALE ANALYSIS]</scope>
</reference>
<organism>
    <name type="scientific">Schizosaccharomyces pombe (strain 972 / ATCC 24843)</name>
    <name type="common">Fission yeast</name>
    <dbReference type="NCBI Taxonomy" id="284812"/>
    <lineage>
        <taxon>Eukaryota</taxon>
        <taxon>Fungi</taxon>
        <taxon>Dikarya</taxon>
        <taxon>Ascomycota</taxon>
        <taxon>Taphrinomycotina</taxon>
        <taxon>Schizosaccharomycetes</taxon>
        <taxon>Schizosaccharomycetales</taxon>
        <taxon>Schizosaccharomycetaceae</taxon>
        <taxon>Schizosaccharomyces</taxon>
    </lineage>
</organism>
<protein>
    <recommendedName>
        <fullName>Meiotically up-regulated gene 122 protein</fullName>
    </recommendedName>
</protein>